<dbReference type="EMBL" id="CP000969">
    <property type="protein sequence ID" value="ACB09598.1"/>
    <property type="molecule type" value="Genomic_DNA"/>
</dbReference>
<dbReference type="RefSeq" id="WP_004082029.1">
    <property type="nucleotide sequence ID" value="NC_010483.1"/>
</dbReference>
<dbReference type="SMR" id="B1LBA0"/>
<dbReference type="KEGG" id="trq:TRQ2_1254"/>
<dbReference type="HOGENOM" id="CLU_169643_4_3_0"/>
<dbReference type="Proteomes" id="UP000001687">
    <property type="component" value="Chromosome"/>
</dbReference>
<dbReference type="GO" id="GO:0022625">
    <property type="term" value="C:cytosolic large ribosomal subunit"/>
    <property type="evidence" value="ECO:0007669"/>
    <property type="project" value="TreeGrafter"/>
</dbReference>
<dbReference type="GO" id="GO:0003735">
    <property type="term" value="F:structural constituent of ribosome"/>
    <property type="evidence" value="ECO:0007669"/>
    <property type="project" value="InterPro"/>
</dbReference>
<dbReference type="GO" id="GO:0006412">
    <property type="term" value="P:translation"/>
    <property type="evidence" value="ECO:0007669"/>
    <property type="project" value="UniProtKB-UniRule"/>
</dbReference>
<dbReference type="FunFam" id="4.10.410.60:FF:000001">
    <property type="entry name" value="50S ribosomal protein L35"/>
    <property type="match status" value="1"/>
</dbReference>
<dbReference type="Gene3D" id="4.10.410.60">
    <property type="match status" value="1"/>
</dbReference>
<dbReference type="HAMAP" id="MF_00514">
    <property type="entry name" value="Ribosomal_bL35"/>
    <property type="match status" value="1"/>
</dbReference>
<dbReference type="InterPro" id="IPR001706">
    <property type="entry name" value="Ribosomal_bL35"/>
</dbReference>
<dbReference type="InterPro" id="IPR021137">
    <property type="entry name" value="Ribosomal_bL35-like"/>
</dbReference>
<dbReference type="InterPro" id="IPR018265">
    <property type="entry name" value="Ribosomal_bL35_CS"/>
</dbReference>
<dbReference type="InterPro" id="IPR037229">
    <property type="entry name" value="Ribosomal_bL35_sf"/>
</dbReference>
<dbReference type="NCBIfam" id="TIGR00001">
    <property type="entry name" value="rpmI_bact"/>
    <property type="match status" value="1"/>
</dbReference>
<dbReference type="PANTHER" id="PTHR33343">
    <property type="entry name" value="54S RIBOSOMAL PROTEIN BL35M"/>
    <property type="match status" value="1"/>
</dbReference>
<dbReference type="PANTHER" id="PTHR33343:SF1">
    <property type="entry name" value="LARGE RIBOSOMAL SUBUNIT PROTEIN BL35M"/>
    <property type="match status" value="1"/>
</dbReference>
<dbReference type="Pfam" id="PF01632">
    <property type="entry name" value="Ribosomal_L35p"/>
    <property type="match status" value="1"/>
</dbReference>
<dbReference type="PRINTS" id="PR00064">
    <property type="entry name" value="RIBOSOMALL35"/>
</dbReference>
<dbReference type="SUPFAM" id="SSF143034">
    <property type="entry name" value="L35p-like"/>
    <property type="match status" value="1"/>
</dbReference>
<dbReference type="PROSITE" id="PS00936">
    <property type="entry name" value="RIBOSOMAL_L35"/>
    <property type="match status" value="1"/>
</dbReference>
<sequence>MPKVKTNRSAAKRFRITKNGKIMRNHAYRSHKTGKKRRNALRALRKKDVVSSADKNRVLRLLGKK</sequence>
<accession>B1LBA0</accession>
<comment type="similarity">
    <text evidence="1">Belongs to the bacterial ribosomal protein bL35 family.</text>
</comment>
<keyword id="KW-0687">Ribonucleoprotein</keyword>
<keyword id="KW-0689">Ribosomal protein</keyword>
<proteinExistence type="inferred from homology"/>
<feature type="chain" id="PRO_1000127421" description="Large ribosomal subunit protein bL35">
    <location>
        <begin position="1"/>
        <end position="65"/>
    </location>
</feature>
<reference key="1">
    <citation type="journal article" date="2011" name="J. Bacteriol.">
        <title>Genome sequence of Thermotoga sp. strain RQ2, a hyperthermophilic bacterium isolated from a geothermally heated region of the seafloor near Ribeira Quente, the Azores.</title>
        <authorList>
            <person name="Swithers K.S."/>
            <person name="DiPippo J.L."/>
            <person name="Bruce D.C."/>
            <person name="Detter C."/>
            <person name="Tapia R."/>
            <person name="Han S."/>
            <person name="Saunders E."/>
            <person name="Goodwin L.A."/>
            <person name="Han J."/>
            <person name="Woyke T."/>
            <person name="Pitluck S."/>
            <person name="Pennacchio L."/>
            <person name="Nolan M."/>
            <person name="Mikhailova N."/>
            <person name="Lykidis A."/>
            <person name="Land M.L."/>
            <person name="Brettin T."/>
            <person name="Stetter K.O."/>
            <person name="Nelson K.E."/>
            <person name="Gogarten J.P."/>
            <person name="Noll K.M."/>
        </authorList>
    </citation>
    <scope>NUCLEOTIDE SEQUENCE [LARGE SCALE GENOMIC DNA]</scope>
    <source>
        <strain>RQ2</strain>
    </source>
</reference>
<gene>
    <name evidence="1" type="primary">rpmI</name>
    <name type="ordered locus">TRQ2_1254</name>
</gene>
<organism>
    <name type="scientific">Thermotoga sp. (strain RQ2)</name>
    <dbReference type="NCBI Taxonomy" id="126740"/>
    <lineage>
        <taxon>Bacteria</taxon>
        <taxon>Thermotogati</taxon>
        <taxon>Thermotogota</taxon>
        <taxon>Thermotogae</taxon>
        <taxon>Thermotogales</taxon>
        <taxon>Thermotogaceae</taxon>
        <taxon>Thermotoga</taxon>
    </lineage>
</organism>
<protein>
    <recommendedName>
        <fullName evidence="1">Large ribosomal subunit protein bL35</fullName>
    </recommendedName>
    <alternativeName>
        <fullName evidence="2">50S ribosomal protein L35</fullName>
    </alternativeName>
</protein>
<name>RL35_THESQ</name>
<evidence type="ECO:0000255" key="1">
    <source>
        <dbReference type="HAMAP-Rule" id="MF_00514"/>
    </source>
</evidence>
<evidence type="ECO:0000305" key="2"/>